<reference key="1">
    <citation type="journal article" date="1974" name="J. Biol. Chem.">
        <title>Bitis gabonica venom. The amino acid sequence of phospholipase A.</title>
        <authorList>
            <person name="Botes D.P."/>
            <person name="Viljoen C.C."/>
        </authorList>
    </citation>
    <scope>PROTEIN SEQUENCE</scope>
    <source>
        <tissue>Venom</tissue>
    </source>
</reference>
<proteinExistence type="evidence at protein level"/>
<dbReference type="EC" id="3.1.1.4"/>
<dbReference type="PIR" id="A00760">
    <property type="entry name" value="PSBGA"/>
</dbReference>
<dbReference type="SMR" id="P00620"/>
<dbReference type="GO" id="GO:0005576">
    <property type="term" value="C:extracellular region"/>
    <property type="evidence" value="ECO:0007669"/>
    <property type="project" value="UniProtKB-SubCell"/>
</dbReference>
<dbReference type="GO" id="GO:0005509">
    <property type="term" value="F:calcium ion binding"/>
    <property type="evidence" value="ECO:0007669"/>
    <property type="project" value="InterPro"/>
</dbReference>
<dbReference type="GO" id="GO:0047498">
    <property type="term" value="F:calcium-dependent phospholipase A2 activity"/>
    <property type="evidence" value="ECO:0007669"/>
    <property type="project" value="TreeGrafter"/>
</dbReference>
<dbReference type="GO" id="GO:0005543">
    <property type="term" value="F:phospholipid binding"/>
    <property type="evidence" value="ECO:0007669"/>
    <property type="project" value="TreeGrafter"/>
</dbReference>
<dbReference type="GO" id="GO:0050482">
    <property type="term" value="P:arachidonate secretion"/>
    <property type="evidence" value="ECO:0007669"/>
    <property type="project" value="InterPro"/>
</dbReference>
<dbReference type="GO" id="GO:0016042">
    <property type="term" value="P:lipid catabolic process"/>
    <property type="evidence" value="ECO:0007669"/>
    <property type="project" value="UniProtKB-KW"/>
</dbReference>
<dbReference type="GO" id="GO:0006644">
    <property type="term" value="P:phospholipid metabolic process"/>
    <property type="evidence" value="ECO:0007669"/>
    <property type="project" value="InterPro"/>
</dbReference>
<dbReference type="CDD" id="cd00125">
    <property type="entry name" value="PLA2c"/>
    <property type="match status" value="1"/>
</dbReference>
<dbReference type="FunFam" id="1.20.90.10:FF:000001">
    <property type="entry name" value="Basic phospholipase A2 homolog"/>
    <property type="match status" value="1"/>
</dbReference>
<dbReference type="Gene3D" id="1.20.90.10">
    <property type="entry name" value="Phospholipase A2 domain"/>
    <property type="match status" value="1"/>
</dbReference>
<dbReference type="InterPro" id="IPR001211">
    <property type="entry name" value="PLipase_A2"/>
</dbReference>
<dbReference type="InterPro" id="IPR033112">
    <property type="entry name" value="PLipase_A2_Asp_AS"/>
</dbReference>
<dbReference type="InterPro" id="IPR016090">
    <property type="entry name" value="PLipase_A2_dom"/>
</dbReference>
<dbReference type="InterPro" id="IPR036444">
    <property type="entry name" value="PLipase_A2_dom_sf"/>
</dbReference>
<dbReference type="InterPro" id="IPR033113">
    <property type="entry name" value="PLipase_A2_His_AS"/>
</dbReference>
<dbReference type="PANTHER" id="PTHR11716:SF101">
    <property type="entry name" value="BASIC PHOSPHOLIPASE A2 PA-11-LIKE"/>
    <property type="match status" value="1"/>
</dbReference>
<dbReference type="PANTHER" id="PTHR11716">
    <property type="entry name" value="PHOSPHOLIPASE A2 FAMILY MEMBER"/>
    <property type="match status" value="1"/>
</dbReference>
<dbReference type="Pfam" id="PF00068">
    <property type="entry name" value="Phospholip_A2_1"/>
    <property type="match status" value="1"/>
</dbReference>
<dbReference type="PRINTS" id="PR00389">
    <property type="entry name" value="PHPHLIPASEA2"/>
</dbReference>
<dbReference type="SMART" id="SM00085">
    <property type="entry name" value="PA2c"/>
    <property type="match status" value="1"/>
</dbReference>
<dbReference type="SUPFAM" id="SSF48619">
    <property type="entry name" value="Phospholipase A2, PLA2"/>
    <property type="match status" value="1"/>
</dbReference>
<dbReference type="PROSITE" id="PS00119">
    <property type="entry name" value="PA2_ASP"/>
    <property type="match status" value="1"/>
</dbReference>
<dbReference type="PROSITE" id="PS00118">
    <property type="entry name" value="PA2_HIS"/>
    <property type="match status" value="1"/>
</dbReference>
<evidence type="ECO:0000250" key="1"/>
<evidence type="ECO:0000255" key="2">
    <source>
        <dbReference type="PROSITE-ProRule" id="PRU10035"/>
    </source>
</evidence>
<evidence type="ECO:0000255" key="3">
    <source>
        <dbReference type="PROSITE-ProRule" id="PRU10036"/>
    </source>
</evidence>
<evidence type="ECO:0000305" key="4"/>
<protein>
    <recommendedName>
        <fullName>Acidic phospholipase A2</fullName>
        <shortName>svPLA2</shortName>
        <ecNumber>3.1.1.4</ecNumber>
    </recommendedName>
    <alternativeName>
        <fullName>Phosphatidylcholine 2-acylhydrolase</fullName>
    </alternativeName>
</protein>
<accession>P00620</accession>
<organism>
    <name type="scientific">Bitis gabonica</name>
    <name type="common">Gaboon adder</name>
    <name type="synonym">Gaboon viper</name>
    <dbReference type="NCBI Taxonomy" id="8694"/>
    <lineage>
        <taxon>Eukaryota</taxon>
        <taxon>Metazoa</taxon>
        <taxon>Chordata</taxon>
        <taxon>Craniata</taxon>
        <taxon>Vertebrata</taxon>
        <taxon>Euteleostomi</taxon>
        <taxon>Lepidosauria</taxon>
        <taxon>Squamata</taxon>
        <taxon>Bifurcata</taxon>
        <taxon>Unidentata</taxon>
        <taxon>Episquamata</taxon>
        <taxon>Toxicofera</taxon>
        <taxon>Serpentes</taxon>
        <taxon>Colubroidea</taxon>
        <taxon>Viperidae</taxon>
        <taxon>Viperinae</taxon>
        <taxon>Bitis</taxon>
    </lineage>
</organism>
<feature type="chain" id="PRO_0000161615" description="Acidic phospholipase A2">
    <location>
        <begin position="1"/>
        <end position="118"/>
    </location>
</feature>
<feature type="active site" evidence="1">
    <location>
        <position position="45"/>
    </location>
</feature>
<feature type="active site" evidence="1">
    <location>
        <position position="86"/>
    </location>
</feature>
<feature type="binding site" evidence="1">
    <location>
        <position position="25"/>
    </location>
    <ligand>
        <name>Ca(2+)</name>
        <dbReference type="ChEBI" id="CHEBI:29108"/>
    </ligand>
</feature>
<feature type="binding site" evidence="1">
    <location>
        <position position="27"/>
    </location>
    <ligand>
        <name>Ca(2+)</name>
        <dbReference type="ChEBI" id="CHEBI:29108"/>
    </ligand>
</feature>
<feature type="binding site" evidence="1">
    <location>
        <position position="29"/>
    </location>
    <ligand>
        <name>Ca(2+)</name>
        <dbReference type="ChEBI" id="CHEBI:29108"/>
    </ligand>
</feature>
<feature type="binding site" evidence="1">
    <location>
        <position position="46"/>
    </location>
    <ligand>
        <name>Ca(2+)</name>
        <dbReference type="ChEBI" id="CHEBI:29108"/>
    </ligand>
</feature>
<keyword id="KW-0106">Calcium</keyword>
<keyword id="KW-0903">Direct protein sequencing</keyword>
<keyword id="KW-1015">Disulfide bond</keyword>
<keyword id="KW-0378">Hydrolase</keyword>
<keyword id="KW-0442">Lipid degradation</keyword>
<keyword id="KW-0443">Lipid metabolism</keyword>
<keyword id="KW-0479">Metal-binding</keyword>
<keyword id="KW-0964">Secreted</keyword>
<sequence>DLTQFGNMINKMGQSVFDYIYYGCYCGWGGKGKPIDATDRCCFVHDCCYGKMGTYDTKWTSYNYEIQNGGIDCDEDPQKKELCECDRVAAICFANNRNTYNSNYFGHSSSKCTGTEQC</sequence>
<comment type="function">
    <text>PLA2 catalyzes the calcium-dependent hydrolysis of the 2-acyl groups in 3-sn-phosphoglycerides.</text>
</comment>
<comment type="catalytic activity">
    <reaction evidence="2 3">
        <text>a 1,2-diacyl-sn-glycero-3-phosphocholine + H2O = a 1-acyl-sn-glycero-3-phosphocholine + a fatty acid + H(+)</text>
        <dbReference type="Rhea" id="RHEA:15801"/>
        <dbReference type="ChEBI" id="CHEBI:15377"/>
        <dbReference type="ChEBI" id="CHEBI:15378"/>
        <dbReference type="ChEBI" id="CHEBI:28868"/>
        <dbReference type="ChEBI" id="CHEBI:57643"/>
        <dbReference type="ChEBI" id="CHEBI:58168"/>
        <dbReference type="EC" id="3.1.1.4"/>
    </reaction>
</comment>
<comment type="cofactor">
    <cofactor evidence="1">
        <name>Ca(2+)</name>
        <dbReference type="ChEBI" id="CHEBI:29108"/>
    </cofactor>
    <text evidence="1">Binds 1 Ca(2+) ion.</text>
</comment>
<comment type="subcellular location">
    <subcellularLocation>
        <location>Secreted</location>
    </subcellularLocation>
</comment>
<comment type="tissue specificity">
    <text>Expressed by the venom gland.</text>
</comment>
<comment type="PTM">
    <text>Six disulfide bonds are present.</text>
</comment>
<comment type="similarity">
    <text evidence="4">Belongs to the phospholipase A2 family. Group II subfamily. D49 sub-subfamily.</text>
</comment>
<name>PA2A_BITGA</name>